<name>RPIA_AROAE</name>
<gene>
    <name evidence="1" type="primary">rpiA</name>
    <name type="ordered locus">AZOSEA05700</name>
    <name type="ORF">ebA1080</name>
</gene>
<reference key="1">
    <citation type="journal article" date="2005" name="Arch. Microbiol.">
        <title>The genome sequence of an anaerobic aromatic-degrading denitrifying bacterium, strain EbN1.</title>
        <authorList>
            <person name="Rabus R."/>
            <person name="Kube M."/>
            <person name="Heider J."/>
            <person name="Beck A."/>
            <person name="Heitmann K."/>
            <person name="Widdel F."/>
            <person name="Reinhardt R."/>
        </authorList>
    </citation>
    <scope>NUCLEOTIDE SEQUENCE [LARGE SCALE GENOMIC DNA]</scope>
    <source>
        <strain>DSM 19018 / LMG 30748 / EbN1</strain>
    </source>
</reference>
<evidence type="ECO:0000255" key="1">
    <source>
        <dbReference type="HAMAP-Rule" id="MF_00170"/>
    </source>
</evidence>
<sequence length="220" mass="23192">MTQDELKKAAAIAALDYVENGMIVGVGTGSTVNHFIDGLAGIKGRIAGAVSSSEASARRLQAHGIPVLDLNDITDLPVYVDGADEIDGGFCMIKGGGGALTREKIVAAVARRFICICDASKKVACLGRFPLPVEIIPMARAYVERELVRIGGRPELREGFVTDNGNLIVDVHGLMITSPRALETELNQIVGVVTNGLFARRGADVLLLATLAGVERQVAN</sequence>
<proteinExistence type="inferred from homology"/>
<keyword id="KW-0413">Isomerase</keyword>
<keyword id="KW-1185">Reference proteome</keyword>
<accession>Q5P7L9</accession>
<organism>
    <name type="scientific">Aromatoleum aromaticum (strain DSM 19018 / LMG 30748 / EbN1)</name>
    <name type="common">Azoarcus sp. (strain EbN1)</name>
    <dbReference type="NCBI Taxonomy" id="76114"/>
    <lineage>
        <taxon>Bacteria</taxon>
        <taxon>Pseudomonadati</taxon>
        <taxon>Pseudomonadota</taxon>
        <taxon>Betaproteobacteria</taxon>
        <taxon>Rhodocyclales</taxon>
        <taxon>Rhodocyclaceae</taxon>
        <taxon>Aromatoleum</taxon>
    </lineage>
</organism>
<protein>
    <recommendedName>
        <fullName evidence="1">Ribose-5-phosphate isomerase A</fullName>
        <ecNumber evidence="1">5.3.1.6</ecNumber>
    </recommendedName>
    <alternativeName>
        <fullName evidence="1">Phosphoriboisomerase A</fullName>
        <shortName evidence="1">PRI</shortName>
    </alternativeName>
</protein>
<dbReference type="EC" id="5.3.1.6" evidence="1"/>
<dbReference type="EMBL" id="CR555306">
    <property type="protein sequence ID" value="CAI06692.1"/>
    <property type="molecule type" value="Genomic_DNA"/>
</dbReference>
<dbReference type="RefSeq" id="WP_011236422.1">
    <property type="nucleotide sequence ID" value="NC_006513.1"/>
</dbReference>
<dbReference type="SMR" id="Q5P7L9"/>
<dbReference type="STRING" id="76114.ebA1080"/>
<dbReference type="KEGG" id="eba:ebA1080"/>
<dbReference type="eggNOG" id="COG0120">
    <property type="taxonomic scope" value="Bacteria"/>
</dbReference>
<dbReference type="HOGENOM" id="CLU_056590_1_1_4"/>
<dbReference type="OrthoDB" id="5870696at2"/>
<dbReference type="UniPathway" id="UPA00115">
    <property type="reaction ID" value="UER00412"/>
</dbReference>
<dbReference type="Proteomes" id="UP000006552">
    <property type="component" value="Chromosome"/>
</dbReference>
<dbReference type="GO" id="GO:0005829">
    <property type="term" value="C:cytosol"/>
    <property type="evidence" value="ECO:0007669"/>
    <property type="project" value="TreeGrafter"/>
</dbReference>
<dbReference type="GO" id="GO:0004751">
    <property type="term" value="F:ribose-5-phosphate isomerase activity"/>
    <property type="evidence" value="ECO:0007669"/>
    <property type="project" value="UniProtKB-UniRule"/>
</dbReference>
<dbReference type="GO" id="GO:0006014">
    <property type="term" value="P:D-ribose metabolic process"/>
    <property type="evidence" value="ECO:0007669"/>
    <property type="project" value="TreeGrafter"/>
</dbReference>
<dbReference type="GO" id="GO:0009052">
    <property type="term" value="P:pentose-phosphate shunt, non-oxidative branch"/>
    <property type="evidence" value="ECO:0007669"/>
    <property type="project" value="UniProtKB-UniRule"/>
</dbReference>
<dbReference type="CDD" id="cd01398">
    <property type="entry name" value="RPI_A"/>
    <property type="match status" value="1"/>
</dbReference>
<dbReference type="FunFam" id="3.30.70.260:FF:000004">
    <property type="entry name" value="Ribose-5-phosphate isomerase A"/>
    <property type="match status" value="1"/>
</dbReference>
<dbReference type="FunFam" id="3.40.50.1360:FF:000001">
    <property type="entry name" value="Ribose-5-phosphate isomerase A"/>
    <property type="match status" value="1"/>
</dbReference>
<dbReference type="Gene3D" id="3.30.70.260">
    <property type="match status" value="1"/>
</dbReference>
<dbReference type="Gene3D" id="3.40.50.1360">
    <property type="match status" value="1"/>
</dbReference>
<dbReference type="HAMAP" id="MF_00170">
    <property type="entry name" value="Rib_5P_isom_A"/>
    <property type="match status" value="1"/>
</dbReference>
<dbReference type="InterPro" id="IPR037171">
    <property type="entry name" value="NagB/RpiA_transferase-like"/>
</dbReference>
<dbReference type="InterPro" id="IPR020672">
    <property type="entry name" value="Ribose5P_isomerase_typA_subgr"/>
</dbReference>
<dbReference type="InterPro" id="IPR004788">
    <property type="entry name" value="Ribose5P_isomerase_type_A"/>
</dbReference>
<dbReference type="NCBIfam" id="NF001924">
    <property type="entry name" value="PRK00702.1"/>
    <property type="match status" value="1"/>
</dbReference>
<dbReference type="NCBIfam" id="TIGR00021">
    <property type="entry name" value="rpiA"/>
    <property type="match status" value="1"/>
</dbReference>
<dbReference type="PANTHER" id="PTHR11934">
    <property type="entry name" value="RIBOSE-5-PHOSPHATE ISOMERASE"/>
    <property type="match status" value="1"/>
</dbReference>
<dbReference type="PANTHER" id="PTHR11934:SF0">
    <property type="entry name" value="RIBOSE-5-PHOSPHATE ISOMERASE"/>
    <property type="match status" value="1"/>
</dbReference>
<dbReference type="Pfam" id="PF06026">
    <property type="entry name" value="Rib_5-P_isom_A"/>
    <property type="match status" value="1"/>
</dbReference>
<dbReference type="SUPFAM" id="SSF75445">
    <property type="entry name" value="D-ribose-5-phosphate isomerase (RpiA), lid domain"/>
    <property type="match status" value="1"/>
</dbReference>
<dbReference type="SUPFAM" id="SSF100950">
    <property type="entry name" value="NagB/RpiA/CoA transferase-like"/>
    <property type="match status" value="1"/>
</dbReference>
<feature type="chain" id="PRO_0000158381" description="Ribose-5-phosphate isomerase A">
    <location>
        <begin position="1"/>
        <end position="220"/>
    </location>
</feature>
<feature type="active site" description="Proton acceptor" evidence="1">
    <location>
        <position position="103"/>
    </location>
</feature>
<feature type="binding site" evidence="1">
    <location>
        <begin position="28"/>
        <end position="31"/>
    </location>
    <ligand>
        <name>substrate</name>
    </ligand>
</feature>
<feature type="binding site" evidence="1">
    <location>
        <begin position="81"/>
        <end position="84"/>
    </location>
    <ligand>
        <name>substrate</name>
    </ligand>
</feature>
<feature type="binding site" evidence="1">
    <location>
        <begin position="94"/>
        <end position="97"/>
    </location>
    <ligand>
        <name>substrate</name>
    </ligand>
</feature>
<feature type="binding site" evidence="1">
    <location>
        <position position="121"/>
    </location>
    <ligand>
        <name>substrate</name>
    </ligand>
</feature>
<comment type="function">
    <text evidence="1">Catalyzes the reversible conversion of ribose-5-phosphate to ribulose 5-phosphate.</text>
</comment>
<comment type="catalytic activity">
    <reaction evidence="1">
        <text>aldehydo-D-ribose 5-phosphate = D-ribulose 5-phosphate</text>
        <dbReference type="Rhea" id="RHEA:14657"/>
        <dbReference type="ChEBI" id="CHEBI:58121"/>
        <dbReference type="ChEBI" id="CHEBI:58273"/>
        <dbReference type="EC" id="5.3.1.6"/>
    </reaction>
</comment>
<comment type="pathway">
    <text evidence="1">Carbohydrate degradation; pentose phosphate pathway; D-ribose 5-phosphate from D-ribulose 5-phosphate (non-oxidative stage): step 1/1.</text>
</comment>
<comment type="subunit">
    <text evidence="1">Homodimer.</text>
</comment>
<comment type="similarity">
    <text evidence="1">Belongs to the ribose 5-phosphate isomerase family.</text>
</comment>